<gene>
    <name evidence="7" type="primary">CRE15</name>
    <name type="ORF">PITG_17316</name>
</gene>
<sequence>MITFKRLSSARWGALLTSIAVLFFLAITKGADAKAGADLADIQAYRRLRTTTADAYYASEDRVFSVVKALKDLAHNAKLTFSLDKQLKVNNRFEVLRVKQVKTDVFSSSEFTDWAHYVAKICKRGRLPADRAIFKTMAAHYGDDELARMLATAKRTSRDTVVYQLKEIQQKSWKESGKSADDVYAILQLDAGGQNVLNNPGLPAWLSYVKSPSTDYIEALLLKLREQYDDVTVAKMIVSSQSGVNKRISGQLEKELSTAWRKNHITEMEVFQLLKLNDAGTTLLKNPILEIWFHYVWKMKRNDPYELLVSWFKKAGIDDAGLGKMIATAKQDDRNYWIAQTLEQRLSGK</sequence>
<name>CRE15_PHYIT</name>
<accession>D0NVS7</accession>
<protein>
    <recommendedName>
        <fullName evidence="7">RxLR effector protein CRE15</fullName>
    </recommendedName>
    <alternativeName>
        <fullName evidence="7">Core RXLR effector 15</fullName>
    </alternativeName>
</protein>
<organism>
    <name type="scientific">Phytophthora infestans (strain T30-4)</name>
    <name type="common">Potato late blight agent</name>
    <dbReference type="NCBI Taxonomy" id="403677"/>
    <lineage>
        <taxon>Eukaryota</taxon>
        <taxon>Sar</taxon>
        <taxon>Stramenopiles</taxon>
        <taxon>Oomycota</taxon>
        <taxon>Peronosporales</taxon>
        <taxon>Peronosporaceae</taxon>
        <taxon>Phytophthora</taxon>
    </lineage>
</organism>
<keyword id="KW-1032">Host cell membrane</keyword>
<keyword id="KW-1043">Host membrane</keyword>
<keyword id="KW-0472">Membrane</keyword>
<keyword id="KW-1185">Reference proteome</keyword>
<keyword id="KW-0964">Secreted</keyword>
<keyword id="KW-0732">Signal</keyword>
<evidence type="ECO:0000255" key="1"/>
<evidence type="ECO:0000269" key="2">
    <source>
    </source>
</evidence>
<evidence type="ECO:0000269" key="3">
    <source>
    </source>
</evidence>
<evidence type="ECO:0000269" key="4">
    <source>
    </source>
</evidence>
<evidence type="ECO:0000269" key="5">
    <source>
    </source>
</evidence>
<evidence type="ECO:0000269" key="6">
    <source>
    </source>
</evidence>
<evidence type="ECO:0000303" key="7">
    <source>
    </source>
</evidence>
<evidence type="ECO:0000305" key="8"/>
<evidence type="ECO:0000305" key="9">
    <source>
    </source>
</evidence>
<proteinExistence type="evidence at protein level"/>
<comment type="function">
    <text evidence="6">Effector that promotes P.infestans virulence in Nicotiana benthamiana and potato (PubMed:29588335). Attenuates cell death triggered by the pathogen-associated molecular pattern infestin 1 (INF1), indicating that the effector suppresses pattern-triggered immunity. However, it does not attenuate cell death triggered by a range of resistance proteins, suggesting that it specifically suppresses INF1-triggered cell death (ICD) (PubMed:29588335). Targets host MAP3K VIK in order to utilize or promote its ability to negatively regulate immunity (PubMed:29588335).</text>
</comment>
<comment type="subunit">
    <text evidence="6">Interacts directly with the potato ortholog of vascular highway 1 (VH1)-interacting kinase (VIK), encoding a predicted MEK kinase (MAP3K).</text>
</comment>
<comment type="subcellular location">
    <subcellularLocation>
        <location evidence="6">Secreted</location>
    </subcellularLocation>
    <subcellularLocation>
        <location evidence="6">Host cell membrane</location>
    </subcellularLocation>
</comment>
<comment type="induction">
    <text evidence="2 3 4 5">Expression is up-regulated during the biotrophic phase of infection on host plants.</text>
</comment>
<comment type="domain">
    <text evidence="9">The RxLR-dEER motif acts to carry the protein into the host cell cytoplasm through binding to cell surface phosphatidylinositol-3-phosphate.</text>
</comment>
<comment type="similarity">
    <text evidence="8">Belongs to the RxLR effector family.</text>
</comment>
<reference key="1">
    <citation type="journal article" date="2009" name="Nature">
        <title>Genome sequence and analysis of the Irish potato famine pathogen Phytophthora infestans.</title>
        <authorList>
            <consortium name="The Broad Institute Genome Sequencing Platform"/>
            <person name="Haas B.J."/>
            <person name="Kamoun S."/>
            <person name="Zody M.C."/>
            <person name="Jiang R.H."/>
            <person name="Handsaker R.E."/>
            <person name="Cano L.M."/>
            <person name="Grabherr M."/>
            <person name="Kodira C.D."/>
            <person name="Raffaele S."/>
            <person name="Torto-Alalibo T."/>
            <person name="Bozkurt T.O."/>
            <person name="Ah-Fong A.M."/>
            <person name="Alvarado L."/>
            <person name="Anderson V.L."/>
            <person name="Armstrong M.R."/>
            <person name="Avrova A."/>
            <person name="Baxter L."/>
            <person name="Beynon J."/>
            <person name="Boevink P.C."/>
            <person name="Bollmann S.R."/>
            <person name="Bos J.I."/>
            <person name="Bulone V."/>
            <person name="Cai G."/>
            <person name="Cakir C."/>
            <person name="Carrington J.C."/>
            <person name="Chawner M."/>
            <person name="Conti L."/>
            <person name="Costanzo S."/>
            <person name="Ewan R."/>
            <person name="Fahlgren N."/>
            <person name="Fischbach M.A."/>
            <person name="Fugelstad J."/>
            <person name="Gilroy E.M."/>
            <person name="Gnerre S."/>
            <person name="Green P.J."/>
            <person name="Grenville-Briggs L.J."/>
            <person name="Griffith J."/>
            <person name="Grunwald N.J."/>
            <person name="Horn K."/>
            <person name="Horner N.R."/>
            <person name="Hu C.H."/>
            <person name="Huitema E."/>
            <person name="Jeong D.H."/>
            <person name="Jones A.M."/>
            <person name="Jones J.D."/>
            <person name="Jones R.W."/>
            <person name="Karlsson E.K."/>
            <person name="Kunjeti S.G."/>
            <person name="Lamour K."/>
            <person name="Liu Z."/>
            <person name="Ma L."/>
            <person name="Maclean D."/>
            <person name="Chibucos M.C."/>
            <person name="McDonald H."/>
            <person name="McWalters J."/>
            <person name="Meijer H.J."/>
            <person name="Morgan W."/>
            <person name="Morris P.F."/>
            <person name="Munro C.A."/>
            <person name="O'Neill K."/>
            <person name="Ospina-Giraldo M."/>
            <person name="Pinzon A."/>
            <person name="Pritchard L."/>
            <person name="Ramsahoye B."/>
            <person name="Ren Q."/>
            <person name="Restrepo S."/>
            <person name="Roy S."/>
            <person name="Sadanandom A."/>
            <person name="Savidor A."/>
            <person name="Schornack S."/>
            <person name="Schwartz D.C."/>
            <person name="Schumann U.D."/>
            <person name="Schwessinger B."/>
            <person name="Seyer L."/>
            <person name="Sharpe T."/>
            <person name="Silvar C."/>
            <person name="Song J."/>
            <person name="Studholme D.J."/>
            <person name="Sykes S."/>
            <person name="Thines M."/>
            <person name="van de Vondervoort P.J."/>
            <person name="Phuntumart V."/>
            <person name="Wawra S."/>
            <person name="Weide R."/>
            <person name="Win J."/>
            <person name="Young C."/>
            <person name="Zhou S."/>
            <person name="Fry W."/>
            <person name="Meyers B.C."/>
            <person name="van West P."/>
            <person name="Ristaino J."/>
            <person name="Govers F."/>
            <person name="Birch P.R."/>
            <person name="Whisson S.C."/>
            <person name="Judelson H.S."/>
            <person name="Nusbaum C."/>
        </authorList>
    </citation>
    <scope>NUCLEOTIDE SEQUENCE [LARGE SCALE GENOMIC DNA]</scope>
    <scope>INDUCTION</scope>
    <source>
        <strain>T30-4</strain>
    </source>
</reference>
<reference key="2">
    <citation type="journal article" date="2012" name="PLoS Pathog.">
        <title>Genome analyses of an aggressive and invasive lineage of the Irish potato famine pathogen.</title>
        <authorList>
            <person name="Cooke D.E."/>
            <person name="Cano L.M."/>
            <person name="Raffaele S."/>
            <person name="Bain R.A."/>
            <person name="Cooke L.R."/>
            <person name="Etherington G.J."/>
            <person name="Deahl K.L."/>
            <person name="Farrer R.A."/>
            <person name="Gilroy E.M."/>
            <person name="Goss E.M."/>
            <person name="Gruenwald N.J."/>
            <person name="Hein I."/>
            <person name="MacLean D."/>
            <person name="McNicol J.W."/>
            <person name="Randall E."/>
            <person name="Oliva R.F."/>
            <person name="Pel M.A."/>
            <person name="Shaw D.S."/>
            <person name="Squires J.N."/>
            <person name="Taylor M.C."/>
            <person name="Vleeshouwers V.G."/>
            <person name="Birch P.R."/>
            <person name="Lees A.K."/>
            <person name="Kamoun S."/>
        </authorList>
    </citation>
    <scope>INDUCTION</scope>
</reference>
<reference key="3">
    <citation type="journal article" date="2017" name="BMC Genomics">
        <title>RNA-seq of life stages of the oomycete Phytophthora infestans reveals dynamic changes in metabolic, signal transduction, and pathogenesis genes and a major role for calcium signaling in development.</title>
        <authorList>
            <person name="Ah-Fong A.M."/>
            <person name="Kim K.S."/>
            <person name="Judelson H.S."/>
        </authorList>
    </citation>
    <scope>INDUCTION</scope>
</reference>
<reference key="4">
    <citation type="journal article" date="2017" name="Front. Plant Sci.">
        <title>Conserved RXLR effector genes of Phytophthora infestans expressed at the early stage of potato infection are suppressive to host defense.</title>
        <authorList>
            <person name="Yin J."/>
            <person name="Gu B."/>
            <person name="Huang G."/>
            <person name="Tian Y."/>
            <person name="Quan J."/>
            <person name="Lindqvist-Kreuze H."/>
            <person name="Shan W."/>
        </authorList>
    </citation>
    <scope>INDUCTION</scope>
</reference>
<reference key="5">
    <citation type="journal article" date="2018" name="Plant Physiol.">
        <title>The potato MAP3K StVIK is required for the Phytophthora infestans RXLR effector Pi17316 to promote disease.</title>
        <authorList>
            <person name="Murphy F."/>
            <person name="He Q."/>
            <person name="Armstrong M."/>
            <person name="Giuliani L.M."/>
            <person name="Boevink P.C."/>
            <person name="Zhang W."/>
            <person name="Tian Z."/>
            <person name="Birch P.R.J."/>
            <person name="Gilroy E.M."/>
        </authorList>
    </citation>
    <scope>FUNCTION</scope>
    <scope>INTERACTION WITH HOST VIK</scope>
    <scope>SUBCELLULAR LOCATION</scope>
</reference>
<dbReference type="EMBL" id="DS028170">
    <property type="protein sequence ID" value="EEY66758.1"/>
    <property type="molecule type" value="Genomic_DNA"/>
</dbReference>
<dbReference type="RefSeq" id="XP_002896823.1">
    <property type="nucleotide sequence ID" value="XM_002896777.1"/>
</dbReference>
<dbReference type="SMR" id="D0NVS7"/>
<dbReference type="EnsemblProtists" id="PITG_17316T0">
    <property type="protein sequence ID" value="PITG_17316T0"/>
    <property type="gene ID" value="PITG_17316"/>
</dbReference>
<dbReference type="GeneID" id="9466553"/>
<dbReference type="KEGG" id="pif:PITG_17316"/>
<dbReference type="VEuPathDB" id="FungiDB:PITG_17316"/>
<dbReference type="eggNOG" id="ENOG502RG36">
    <property type="taxonomic scope" value="Eukaryota"/>
</dbReference>
<dbReference type="HOGENOM" id="CLU_021192_4_1_1"/>
<dbReference type="InParanoid" id="D0NVS7"/>
<dbReference type="OrthoDB" id="94725at2759"/>
<dbReference type="Proteomes" id="UP000006643">
    <property type="component" value="Partially assembled WGS sequence"/>
</dbReference>
<dbReference type="GO" id="GO:0005576">
    <property type="term" value="C:extracellular region"/>
    <property type="evidence" value="ECO:0007669"/>
    <property type="project" value="UniProtKB-SubCell"/>
</dbReference>
<dbReference type="GO" id="GO:0020002">
    <property type="term" value="C:host cell plasma membrane"/>
    <property type="evidence" value="ECO:0007669"/>
    <property type="project" value="UniProtKB-SubCell"/>
</dbReference>
<dbReference type="GO" id="GO:0016020">
    <property type="term" value="C:membrane"/>
    <property type="evidence" value="ECO:0007669"/>
    <property type="project" value="UniProtKB-KW"/>
</dbReference>
<dbReference type="GO" id="GO:0033668">
    <property type="term" value="P:symbiont-mediated suppression of host apoptosis"/>
    <property type="evidence" value="ECO:0000269"/>
    <property type="project" value="SigSci"/>
</dbReference>
<dbReference type="GO" id="GO:0141070">
    <property type="term" value="P:symbiont-mediated suppression of host MAPK cascade"/>
    <property type="evidence" value="ECO:0000269"/>
    <property type="project" value="SigSci"/>
</dbReference>
<feature type="signal peptide" evidence="1">
    <location>
        <begin position="1"/>
        <end position="33"/>
    </location>
</feature>
<feature type="chain" id="PRO_5003013116" description="RxLR effector protein CRE15">
    <location>
        <begin position="34"/>
        <end position="349"/>
    </location>
</feature>
<feature type="short sequence motif" description="RxLR-dEER" evidence="9">
    <location>
        <begin position="46"/>
        <end position="62"/>
    </location>
</feature>